<comment type="function">
    <text evidence="1">Could be a mediator in iron transactions between iron acquisition and iron-requiring processes, such as synthesis and/or repair of Fe-S clusters in biosynthetic enzymes.</text>
</comment>
<comment type="subunit">
    <text evidence="1">Monomer.</text>
</comment>
<comment type="similarity">
    <text evidence="1">Belongs to the Fe(2+)-trafficking protein family.</text>
</comment>
<reference key="1">
    <citation type="journal article" date="2009" name="PLoS Genet.">
        <title>Organised genome dynamics in the Escherichia coli species results in highly diverse adaptive paths.</title>
        <authorList>
            <person name="Touchon M."/>
            <person name="Hoede C."/>
            <person name="Tenaillon O."/>
            <person name="Barbe V."/>
            <person name="Baeriswyl S."/>
            <person name="Bidet P."/>
            <person name="Bingen E."/>
            <person name="Bonacorsi S."/>
            <person name="Bouchier C."/>
            <person name="Bouvet O."/>
            <person name="Calteau A."/>
            <person name="Chiapello H."/>
            <person name="Clermont O."/>
            <person name="Cruveiller S."/>
            <person name="Danchin A."/>
            <person name="Diard M."/>
            <person name="Dossat C."/>
            <person name="Karoui M.E."/>
            <person name="Frapy E."/>
            <person name="Garry L."/>
            <person name="Ghigo J.M."/>
            <person name="Gilles A.M."/>
            <person name="Johnson J."/>
            <person name="Le Bouguenec C."/>
            <person name="Lescat M."/>
            <person name="Mangenot S."/>
            <person name="Martinez-Jehanne V."/>
            <person name="Matic I."/>
            <person name="Nassif X."/>
            <person name="Oztas S."/>
            <person name="Petit M.A."/>
            <person name="Pichon C."/>
            <person name="Rouy Z."/>
            <person name="Ruf C.S."/>
            <person name="Schneider D."/>
            <person name="Tourret J."/>
            <person name="Vacherie B."/>
            <person name="Vallenet D."/>
            <person name="Medigue C."/>
            <person name="Rocha E.P.C."/>
            <person name="Denamur E."/>
        </authorList>
    </citation>
    <scope>NUCLEOTIDE SEQUENCE [LARGE SCALE GENOMIC DNA]</scope>
    <source>
        <strain>UMN026 / ExPEC</strain>
    </source>
</reference>
<evidence type="ECO:0000255" key="1">
    <source>
        <dbReference type="HAMAP-Rule" id="MF_00686"/>
    </source>
</evidence>
<keyword id="KW-0408">Iron</keyword>
<feature type="chain" id="PRO_1000131844" description="Probable Fe(2+)-trafficking protein">
    <location>
        <begin position="1"/>
        <end position="91"/>
    </location>
</feature>
<proteinExistence type="inferred from homology"/>
<organism>
    <name type="scientific">Escherichia coli O17:K52:H18 (strain UMN026 / ExPEC)</name>
    <dbReference type="NCBI Taxonomy" id="585056"/>
    <lineage>
        <taxon>Bacteria</taxon>
        <taxon>Pseudomonadati</taxon>
        <taxon>Pseudomonadota</taxon>
        <taxon>Gammaproteobacteria</taxon>
        <taxon>Enterobacterales</taxon>
        <taxon>Enterobacteriaceae</taxon>
        <taxon>Escherichia</taxon>
    </lineage>
</organism>
<accession>B7N7L8</accession>
<sequence>MSRTIFCTFLQREAEGQDFQLYPGELGKRIYNEISKEAWAQWQHKQTMLINEKKLNMMNAEHRKLLEQEMVNFLFEGKEVHIEGYTPEDKK</sequence>
<dbReference type="EMBL" id="CU928163">
    <property type="protein sequence ID" value="CAR14480.1"/>
    <property type="molecule type" value="Genomic_DNA"/>
</dbReference>
<dbReference type="RefSeq" id="WP_000091700.1">
    <property type="nucleotide sequence ID" value="NC_011751.1"/>
</dbReference>
<dbReference type="RefSeq" id="YP_002413999.1">
    <property type="nucleotide sequence ID" value="NC_011751.1"/>
</dbReference>
<dbReference type="SMR" id="B7N7L8"/>
<dbReference type="STRING" id="585056.ECUMN_3317"/>
<dbReference type="KEGG" id="eum:ECUMN_3317"/>
<dbReference type="PATRIC" id="fig|585056.7.peg.3496"/>
<dbReference type="HOGENOM" id="CLU_170994_0_0_6"/>
<dbReference type="Proteomes" id="UP000007097">
    <property type="component" value="Chromosome"/>
</dbReference>
<dbReference type="GO" id="GO:0005829">
    <property type="term" value="C:cytosol"/>
    <property type="evidence" value="ECO:0007669"/>
    <property type="project" value="TreeGrafter"/>
</dbReference>
<dbReference type="GO" id="GO:0005506">
    <property type="term" value="F:iron ion binding"/>
    <property type="evidence" value="ECO:0007669"/>
    <property type="project" value="UniProtKB-UniRule"/>
</dbReference>
<dbReference type="GO" id="GO:0034599">
    <property type="term" value="P:cellular response to oxidative stress"/>
    <property type="evidence" value="ECO:0007669"/>
    <property type="project" value="TreeGrafter"/>
</dbReference>
<dbReference type="FunFam" id="1.10.3880.10:FF:000001">
    <property type="entry name" value="Probable Fe(2+)-trafficking protein"/>
    <property type="match status" value="1"/>
</dbReference>
<dbReference type="Gene3D" id="1.10.3880.10">
    <property type="entry name" value="Fe(II) trafficking protein YggX"/>
    <property type="match status" value="1"/>
</dbReference>
<dbReference type="HAMAP" id="MF_00686">
    <property type="entry name" value="Fe_traffic_YggX"/>
    <property type="match status" value="1"/>
</dbReference>
<dbReference type="InterPro" id="IPR007457">
    <property type="entry name" value="Fe_traffick_prot_YggX"/>
</dbReference>
<dbReference type="InterPro" id="IPR036766">
    <property type="entry name" value="Fe_traffick_prot_YggX_sf"/>
</dbReference>
<dbReference type="NCBIfam" id="NF003817">
    <property type="entry name" value="PRK05408.1"/>
    <property type="match status" value="1"/>
</dbReference>
<dbReference type="PANTHER" id="PTHR36965">
    <property type="entry name" value="FE(2+)-TRAFFICKING PROTEIN-RELATED"/>
    <property type="match status" value="1"/>
</dbReference>
<dbReference type="PANTHER" id="PTHR36965:SF1">
    <property type="entry name" value="FE(2+)-TRAFFICKING PROTEIN-RELATED"/>
    <property type="match status" value="1"/>
</dbReference>
<dbReference type="Pfam" id="PF04362">
    <property type="entry name" value="Iron_traffic"/>
    <property type="match status" value="1"/>
</dbReference>
<dbReference type="PIRSF" id="PIRSF029827">
    <property type="entry name" value="Fe_traffic_YggX"/>
    <property type="match status" value="1"/>
</dbReference>
<dbReference type="SUPFAM" id="SSF111148">
    <property type="entry name" value="YggX-like"/>
    <property type="match status" value="1"/>
</dbReference>
<name>FETP_ECOLU</name>
<gene>
    <name evidence="1" type="primary">yggX</name>
    <name type="ordered locus">ECUMN_3317</name>
</gene>
<protein>
    <recommendedName>
        <fullName evidence="1">Probable Fe(2+)-trafficking protein</fullName>
    </recommendedName>
</protein>